<gene>
    <name evidence="1" type="primary">engB</name>
    <name type="ordered locus">Sfri_3944</name>
</gene>
<sequence length="224" mass="24822">MTDSRIDFRRAKFLISAPDIAHLDQYLPGDIGVEIAFAGRSNAGKSSALNALTEQKSLARTSKTPGRTQLINVFQLDDDRRLVDLPGYGFAQVPLALKHKWQEALGEYLQKRACLSGVVVLMDIRHPLKDLDMQMIEWAVLSNIPVLALLTKSDKLTQSVKMKTVNDVRAALKEFGDKVQVETLSSLKGTGKPKVLSILNDWCHPEWLAEQKAEQASASELAPE</sequence>
<proteinExistence type="inferred from homology"/>
<comment type="function">
    <text evidence="1">Necessary for normal cell division and for the maintenance of normal septation.</text>
</comment>
<comment type="cofactor">
    <cofactor evidence="1">
        <name>Mg(2+)</name>
        <dbReference type="ChEBI" id="CHEBI:18420"/>
    </cofactor>
</comment>
<comment type="similarity">
    <text evidence="1">Belongs to the TRAFAC class TrmE-Era-EngA-EngB-Septin-like GTPase superfamily. EngB GTPase family.</text>
</comment>
<dbReference type="EMBL" id="CP000447">
    <property type="protein sequence ID" value="ABI73769.1"/>
    <property type="molecule type" value="Genomic_DNA"/>
</dbReference>
<dbReference type="SMR" id="Q07W45"/>
<dbReference type="STRING" id="318167.Sfri_3944"/>
<dbReference type="KEGG" id="sfr:Sfri_3944"/>
<dbReference type="eggNOG" id="COG0218">
    <property type="taxonomic scope" value="Bacteria"/>
</dbReference>
<dbReference type="HOGENOM" id="CLU_033732_1_2_6"/>
<dbReference type="OrthoDB" id="9804921at2"/>
<dbReference type="Proteomes" id="UP000000684">
    <property type="component" value="Chromosome"/>
</dbReference>
<dbReference type="GO" id="GO:0005829">
    <property type="term" value="C:cytosol"/>
    <property type="evidence" value="ECO:0007669"/>
    <property type="project" value="TreeGrafter"/>
</dbReference>
<dbReference type="GO" id="GO:0005525">
    <property type="term" value="F:GTP binding"/>
    <property type="evidence" value="ECO:0007669"/>
    <property type="project" value="UniProtKB-UniRule"/>
</dbReference>
<dbReference type="GO" id="GO:0046872">
    <property type="term" value="F:metal ion binding"/>
    <property type="evidence" value="ECO:0007669"/>
    <property type="project" value="UniProtKB-KW"/>
</dbReference>
<dbReference type="GO" id="GO:0000917">
    <property type="term" value="P:division septum assembly"/>
    <property type="evidence" value="ECO:0007669"/>
    <property type="project" value="UniProtKB-KW"/>
</dbReference>
<dbReference type="CDD" id="cd01876">
    <property type="entry name" value="YihA_EngB"/>
    <property type="match status" value="1"/>
</dbReference>
<dbReference type="FunFam" id="3.40.50.300:FF:000098">
    <property type="entry name" value="Probable GTP-binding protein EngB"/>
    <property type="match status" value="1"/>
</dbReference>
<dbReference type="Gene3D" id="3.40.50.300">
    <property type="entry name" value="P-loop containing nucleotide triphosphate hydrolases"/>
    <property type="match status" value="1"/>
</dbReference>
<dbReference type="HAMAP" id="MF_00321">
    <property type="entry name" value="GTPase_EngB"/>
    <property type="match status" value="1"/>
</dbReference>
<dbReference type="InterPro" id="IPR030393">
    <property type="entry name" value="G_ENGB_dom"/>
</dbReference>
<dbReference type="InterPro" id="IPR006073">
    <property type="entry name" value="GTP-bd"/>
</dbReference>
<dbReference type="InterPro" id="IPR019987">
    <property type="entry name" value="GTP-bd_ribosome_bio_YsxC"/>
</dbReference>
<dbReference type="InterPro" id="IPR027417">
    <property type="entry name" value="P-loop_NTPase"/>
</dbReference>
<dbReference type="NCBIfam" id="TIGR03598">
    <property type="entry name" value="GTPase_YsxC"/>
    <property type="match status" value="1"/>
</dbReference>
<dbReference type="PANTHER" id="PTHR11649:SF13">
    <property type="entry name" value="ENGB-TYPE G DOMAIN-CONTAINING PROTEIN"/>
    <property type="match status" value="1"/>
</dbReference>
<dbReference type="PANTHER" id="PTHR11649">
    <property type="entry name" value="MSS1/TRME-RELATED GTP-BINDING PROTEIN"/>
    <property type="match status" value="1"/>
</dbReference>
<dbReference type="Pfam" id="PF01926">
    <property type="entry name" value="MMR_HSR1"/>
    <property type="match status" value="1"/>
</dbReference>
<dbReference type="SUPFAM" id="SSF52540">
    <property type="entry name" value="P-loop containing nucleoside triphosphate hydrolases"/>
    <property type="match status" value="1"/>
</dbReference>
<dbReference type="PROSITE" id="PS51706">
    <property type="entry name" value="G_ENGB"/>
    <property type="match status" value="1"/>
</dbReference>
<organism>
    <name type="scientific">Shewanella frigidimarina (strain NCIMB 400)</name>
    <dbReference type="NCBI Taxonomy" id="318167"/>
    <lineage>
        <taxon>Bacteria</taxon>
        <taxon>Pseudomonadati</taxon>
        <taxon>Pseudomonadota</taxon>
        <taxon>Gammaproteobacteria</taxon>
        <taxon>Alteromonadales</taxon>
        <taxon>Shewanellaceae</taxon>
        <taxon>Shewanella</taxon>
    </lineage>
</organism>
<accession>Q07W45</accession>
<feature type="chain" id="PRO_0000266943" description="Probable GTP-binding protein EngB">
    <location>
        <begin position="1"/>
        <end position="224"/>
    </location>
</feature>
<feature type="domain" description="EngB-type G" evidence="1">
    <location>
        <begin position="31"/>
        <end position="205"/>
    </location>
</feature>
<feature type="binding site" evidence="1">
    <location>
        <begin position="39"/>
        <end position="46"/>
    </location>
    <ligand>
        <name>GTP</name>
        <dbReference type="ChEBI" id="CHEBI:37565"/>
    </ligand>
</feature>
<feature type="binding site" evidence="1">
    <location>
        <position position="46"/>
    </location>
    <ligand>
        <name>Mg(2+)</name>
        <dbReference type="ChEBI" id="CHEBI:18420"/>
    </ligand>
</feature>
<feature type="binding site" evidence="1">
    <location>
        <begin position="66"/>
        <end position="70"/>
    </location>
    <ligand>
        <name>GTP</name>
        <dbReference type="ChEBI" id="CHEBI:37565"/>
    </ligand>
</feature>
<feature type="binding site" evidence="1">
    <location>
        <position position="68"/>
    </location>
    <ligand>
        <name>Mg(2+)</name>
        <dbReference type="ChEBI" id="CHEBI:18420"/>
    </ligand>
</feature>
<feature type="binding site" evidence="1">
    <location>
        <begin position="84"/>
        <end position="87"/>
    </location>
    <ligand>
        <name>GTP</name>
        <dbReference type="ChEBI" id="CHEBI:37565"/>
    </ligand>
</feature>
<feature type="binding site" evidence="1">
    <location>
        <begin position="151"/>
        <end position="154"/>
    </location>
    <ligand>
        <name>GTP</name>
        <dbReference type="ChEBI" id="CHEBI:37565"/>
    </ligand>
</feature>
<feature type="binding site" evidence="1">
    <location>
        <begin position="184"/>
        <end position="186"/>
    </location>
    <ligand>
        <name>GTP</name>
        <dbReference type="ChEBI" id="CHEBI:37565"/>
    </ligand>
</feature>
<reference key="1">
    <citation type="submission" date="2006-08" db="EMBL/GenBank/DDBJ databases">
        <title>Complete sequence of Shewanella frigidimarina NCIMB 400.</title>
        <authorList>
            <consortium name="US DOE Joint Genome Institute"/>
            <person name="Copeland A."/>
            <person name="Lucas S."/>
            <person name="Lapidus A."/>
            <person name="Barry K."/>
            <person name="Detter J.C."/>
            <person name="Glavina del Rio T."/>
            <person name="Hammon N."/>
            <person name="Israni S."/>
            <person name="Dalin E."/>
            <person name="Tice H."/>
            <person name="Pitluck S."/>
            <person name="Fredrickson J.K."/>
            <person name="Kolker E."/>
            <person name="McCuel L.A."/>
            <person name="DiChristina T."/>
            <person name="Nealson K.H."/>
            <person name="Newman D."/>
            <person name="Tiedje J.M."/>
            <person name="Zhou J."/>
            <person name="Romine M.F."/>
            <person name="Culley D.E."/>
            <person name="Serres M."/>
            <person name="Chertkov O."/>
            <person name="Brettin T."/>
            <person name="Bruce D."/>
            <person name="Han C."/>
            <person name="Tapia R."/>
            <person name="Gilna P."/>
            <person name="Schmutz J."/>
            <person name="Larimer F."/>
            <person name="Land M."/>
            <person name="Hauser L."/>
            <person name="Kyrpides N."/>
            <person name="Mikhailova N."/>
            <person name="Richardson P."/>
        </authorList>
    </citation>
    <scope>NUCLEOTIDE SEQUENCE [LARGE SCALE GENOMIC DNA]</scope>
    <source>
        <strain>NCIMB 400</strain>
    </source>
</reference>
<protein>
    <recommendedName>
        <fullName evidence="1">Probable GTP-binding protein EngB</fullName>
    </recommendedName>
</protein>
<keyword id="KW-0131">Cell cycle</keyword>
<keyword id="KW-0132">Cell division</keyword>
<keyword id="KW-0342">GTP-binding</keyword>
<keyword id="KW-0460">Magnesium</keyword>
<keyword id="KW-0479">Metal-binding</keyword>
<keyword id="KW-0547">Nucleotide-binding</keyword>
<keyword id="KW-1185">Reference proteome</keyword>
<keyword id="KW-0717">Septation</keyword>
<evidence type="ECO:0000255" key="1">
    <source>
        <dbReference type="HAMAP-Rule" id="MF_00321"/>
    </source>
</evidence>
<name>ENGB_SHEFN</name>